<comment type="function">
    <text evidence="1">Bidirectionally degrades single-stranded DNA into large acid-insoluble oligonucleotides, which are then degraded further into small acid-soluble oligonucleotides.</text>
</comment>
<comment type="catalytic activity">
    <reaction evidence="1">
        <text>Exonucleolytic cleavage in either 5'- to 3'- or 3'- to 5'-direction to yield nucleoside 5'-phosphates.</text>
        <dbReference type="EC" id="3.1.11.6"/>
    </reaction>
</comment>
<comment type="subunit">
    <text evidence="1">Heterooligomer composed of large and small subunits.</text>
</comment>
<comment type="subcellular location">
    <subcellularLocation>
        <location evidence="1">Cytoplasm</location>
    </subcellularLocation>
</comment>
<comment type="similarity">
    <text evidence="1">Belongs to the XseB family.</text>
</comment>
<feature type="chain" id="PRO_1000079290" description="Exodeoxyribonuclease 7 small subunit">
    <location>
        <begin position="1"/>
        <end position="80"/>
    </location>
</feature>
<sequence>MTNTKTLEANISFEEALKELEEIVKKIDNGQESLETAVNSFERGILLKNHCEKKLKEARLKIEKITKLADSTVVLEEMEV</sequence>
<gene>
    <name evidence="1" type="primary">xseB</name>
    <name type="ordered locus">RrIowa_0567</name>
</gene>
<organism>
    <name type="scientific">Rickettsia rickettsii (strain Iowa)</name>
    <dbReference type="NCBI Taxonomy" id="452659"/>
    <lineage>
        <taxon>Bacteria</taxon>
        <taxon>Pseudomonadati</taxon>
        <taxon>Pseudomonadota</taxon>
        <taxon>Alphaproteobacteria</taxon>
        <taxon>Rickettsiales</taxon>
        <taxon>Rickettsiaceae</taxon>
        <taxon>Rickettsieae</taxon>
        <taxon>Rickettsia</taxon>
        <taxon>spotted fever group</taxon>
    </lineage>
</organism>
<keyword id="KW-0963">Cytoplasm</keyword>
<keyword id="KW-0269">Exonuclease</keyword>
<keyword id="KW-0378">Hydrolase</keyword>
<keyword id="KW-0540">Nuclease</keyword>
<name>EX7S_RICRO</name>
<dbReference type="EC" id="3.1.11.6" evidence="1"/>
<dbReference type="EMBL" id="CP000766">
    <property type="protein sequence ID" value="ABY72441.1"/>
    <property type="molecule type" value="Genomic_DNA"/>
</dbReference>
<dbReference type="RefSeq" id="WP_004996011.1">
    <property type="nucleotide sequence ID" value="NC_010263.3"/>
</dbReference>
<dbReference type="SMR" id="B0BX65"/>
<dbReference type="KEGG" id="rrj:RrIowa_0567"/>
<dbReference type="eggNOG" id="COG1722">
    <property type="taxonomic scope" value="Bacteria"/>
</dbReference>
<dbReference type="HOGENOM" id="CLU_145918_0_3_5"/>
<dbReference type="Proteomes" id="UP000000796">
    <property type="component" value="Chromosome"/>
</dbReference>
<dbReference type="GO" id="GO:0005829">
    <property type="term" value="C:cytosol"/>
    <property type="evidence" value="ECO:0007669"/>
    <property type="project" value="TreeGrafter"/>
</dbReference>
<dbReference type="GO" id="GO:0009318">
    <property type="term" value="C:exodeoxyribonuclease VII complex"/>
    <property type="evidence" value="ECO:0007669"/>
    <property type="project" value="InterPro"/>
</dbReference>
<dbReference type="GO" id="GO:0008855">
    <property type="term" value="F:exodeoxyribonuclease VII activity"/>
    <property type="evidence" value="ECO:0007669"/>
    <property type="project" value="UniProtKB-UniRule"/>
</dbReference>
<dbReference type="GO" id="GO:0006308">
    <property type="term" value="P:DNA catabolic process"/>
    <property type="evidence" value="ECO:0007669"/>
    <property type="project" value="UniProtKB-UniRule"/>
</dbReference>
<dbReference type="Gene3D" id="1.10.287.1040">
    <property type="entry name" value="Exonuclease VII, small subunit"/>
    <property type="match status" value="1"/>
</dbReference>
<dbReference type="HAMAP" id="MF_00337">
    <property type="entry name" value="Exonuc_7_S"/>
    <property type="match status" value="1"/>
</dbReference>
<dbReference type="InterPro" id="IPR003761">
    <property type="entry name" value="Exonuc_VII_S"/>
</dbReference>
<dbReference type="InterPro" id="IPR037004">
    <property type="entry name" value="Exonuc_VII_ssu_sf"/>
</dbReference>
<dbReference type="NCBIfam" id="NF002139">
    <property type="entry name" value="PRK00977.1-3"/>
    <property type="match status" value="1"/>
</dbReference>
<dbReference type="NCBIfam" id="NF002140">
    <property type="entry name" value="PRK00977.1-4"/>
    <property type="match status" value="1"/>
</dbReference>
<dbReference type="NCBIfam" id="TIGR01280">
    <property type="entry name" value="xseB"/>
    <property type="match status" value="1"/>
</dbReference>
<dbReference type="PANTHER" id="PTHR34137">
    <property type="entry name" value="EXODEOXYRIBONUCLEASE 7 SMALL SUBUNIT"/>
    <property type="match status" value="1"/>
</dbReference>
<dbReference type="PANTHER" id="PTHR34137:SF1">
    <property type="entry name" value="EXODEOXYRIBONUCLEASE 7 SMALL SUBUNIT"/>
    <property type="match status" value="1"/>
</dbReference>
<dbReference type="Pfam" id="PF02609">
    <property type="entry name" value="Exonuc_VII_S"/>
    <property type="match status" value="1"/>
</dbReference>
<dbReference type="PIRSF" id="PIRSF006488">
    <property type="entry name" value="Exonuc_VII_S"/>
    <property type="match status" value="1"/>
</dbReference>
<dbReference type="SUPFAM" id="SSF116842">
    <property type="entry name" value="XseB-like"/>
    <property type="match status" value="1"/>
</dbReference>
<protein>
    <recommendedName>
        <fullName evidence="1">Exodeoxyribonuclease 7 small subunit</fullName>
        <ecNumber evidence="1">3.1.11.6</ecNumber>
    </recommendedName>
    <alternativeName>
        <fullName evidence="1">Exodeoxyribonuclease VII small subunit</fullName>
        <shortName evidence="1">Exonuclease VII small subunit</shortName>
    </alternativeName>
</protein>
<accession>B0BX65</accession>
<reference key="1">
    <citation type="journal article" date="2008" name="Infect. Immun.">
        <title>Genomic comparison of virulent Rickettsia rickettsii Sheila Smith and avirulent Rickettsia rickettsii Iowa.</title>
        <authorList>
            <person name="Ellison D.W."/>
            <person name="Clark T.R."/>
            <person name="Sturdevant D.E."/>
            <person name="Virtaneva K."/>
            <person name="Porcella S.F."/>
            <person name="Hackstadt T."/>
        </authorList>
    </citation>
    <scope>NUCLEOTIDE SEQUENCE [LARGE SCALE GENOMIC DNA]</scope>
    <source>
        <strain>Iowa</strain>
    </source>
</reference>
<proteinExistence type="inferred from homology"/>
<evidence type="ECO:0000255" key="1">
    <source>
        <dbReference type="HAMAP-Rule" id="MF_00337"/>
    </source>
</evidence>